<organism evidence="15">
    <name type="scientific">Arabidopsis thaliana</name>
    <name type="common">Mouse-ear cress</name>
    <dbReference type="NCBI Taxonomy" id="3702"/>
    <lineage>
        <taxon>Eukaryota</taxon>
        <taxon>Viridiplantae</taxon>
        <taxon>Streptophyta</taxon>
        <taxon>Embryophyta</taxon>
        <taxon>Tracheophyta</taxon>
        <taxon>Spermatophyta</taxon>
        <taxon>Magnoliopsida</taxon>
        <taxon>eudicotyledons</taxon>
        <taxon>Gunneridae</taxon>
        <taxon>Pentapetalae</taxon>
        <taxon>rosids</taxon>
        <taxon>malvids</taxon>
        <taxon>Brassicales</taxon>
        <taxon>Brassicaceae</taxon>
        <taxon>Camelineae</taxon>
        <taxon>Arabidopsis</taxon>
    </lineage>
</organism>
<feature type="chain" id="PRO_0000432224" description="MAP3K epsilon protein kinase 1">
    <location>
        <begin position="1"/>
        <end position="1368"/>
    </location>
</feature>
<feature type="domain" description="Protein kinase" evidence="4">
    <location>
        <begin position="20"/>
        <end position="274"/>
    </location>
</feature>
<feature type="repeat" description="HEAT 1" evidence="3">
    <location>
        <begin position="25"/>
        <end position="62"/>
    </location>
</feature>
<feature type="repeat" description="HEAT 2" evidence="3">
    <location>
        <begin position="86"/>
        <end position="125"/>
    </location>
</feature>
<feature type="repeat" description="HEAT 3" evidence="3">
    <location>
        <begin position="218"/>
        <end position="256"/>
    </location>
</feature>
<feature type="repeat" description="HEAT 4" evidence="3">
    <location>
        <begin position="533"/>
        <end position="571"/>
    </location>
</feature>
<feature type="repeat" description="HEAT 5" evidence="3">
    <location>
        <begin position="628"/>
        <end position="653"/>
    </location>
</feature>
<feature type="repeat" description="HEAT 6" evidence="3">
    <location>
        <begin position="654"/>
        <end position="695"/>
    </location>
</feature>
<feature type="repeat" description="HEAT 7" evidence="3">
    <location>
        <begin position="699"/>
        <end position="737"/>
    </location>
</feature>
<feature type="repeat" description="HEAT 8" evidence="3">
    <location>
        <begin position="750"/>
        <end position="788"/>
    </location>
</feature>
<feature type="repeat" description="HEAT 9" evidence="3">
    <location>
        <begin position="903"/>
        <end position="940"/>
    </location>
</feature>
<feature type="repeat" description="HEAT 10" evidence="3">
    <location>
        <begin position="1025"/>
        <end position="1063"/>
    </location>
</feature>
<feature type="repeat" description="HEAT 11" evidence="3">
    <location>
        <begin position="1067"/>
        <end position="1105"/>
    </location>
</feature>
<feature type="repeat" description="HEAT 12" evidence="3">
    <location>
        <begin position="1112"/>
        <end position="1150"/>
    </location>
</feature>
<feature type="repeat" description="HEAT 13" evidence="3">
    <location>
        <begin position="1154"/>
        <end position="1191"/>
    </location>
</feature>
<feature type="repeat" description="HEAT 14" evidence="3">
    <location>
        <begin position="1196"/>
        <end position="1234"/>
    </location>
</feature>
<feature type="repeat" description="HEAT 15" evidence="3">
    <location>
        <begin position="1258"/>
        <end position="1281"/>
    </location>
</feature>
<feature type="repeat" description="HEAT 16" evidence="3">
    <location>
        <begin position="1282"/>
        <end position="1318"/>
    </location>
</feature>
<feature type="repeat" description="HEAT 17" evidence="3">
    <location>
        <begin position="1348"/>
        <end position="1368"/>
    </location>
</feature>
<feature type="region of interest" description="Disordered" evidence="5">
    <location>
        <begin position="296"/>
        <end position="415"/>
    </location>
</feature>
<feature type="region of interest" description="Disordered" evidence="5">
    <location>
        <begin position="430"/>
        <end position="507"/>
    </location>
</feature>
<feature type="region of interest" description="Disordered" evidence="5">
    <location>
        <begin position="777"/>
        <end position="883"/>
    </location>
</feature>
<feature type="compositionally biased region" description="Acidic residues" evidence="5">
    <location>
        <begin position="351"/>
        <end position="364"/>
    </location>
</feature>
<feature type="compositionally biased region" description="Basic and acidic residues" evidence="5">
    <location>
        <begin position="388"/>
        <end position="399"/>
    </location>
</feature>
<feature type="compositionally biased region" description="Basic and acidic residues" evidence="5">
    <location>
        <begin position="470"/>
        <end position="486"/>
    </location>
</feature>
<feature type="compositionally biased region" description="Polar residues" evidence="5">
    <location>
        <begin position="488"/>
        <end position="502"/>
    </location>
</feature>
<feature type="compositionally biased region" description="Polar residues" evidence="5">
    <location>
        <begin position="791"/>
        <end position="808"/>
    </location>
</feature>
<feature type="compositionally biased region" description="Basic and acidic residues" evidence="5">
    <location>
        <begin position="813"/>
        <end position="826"/>
    </location>
</feature>
<feature type="compositionally biased region" description="Basic and acidic residues" evidence="5">
    <location>
        <begin position="836"/>
        <end position="852"/>
    </location>
</feature>
<feature type="active site" description="Proton acceptor" evidence="4">
    <location>
        <position position="144"/>
    </location>
</feature>
<feature type="binding site" evidence="4">
    <location>
        <begin position="26"/>
        <end position="34"/>
    </location>
    <ligand>
        <name>ATP</name>
        <dbReference type="ChEBI" id="CHEBI:30616"/>
    </ligand>
</feature>
<feature type="binding site" evidence="4">
    <location>
        <position position="49"/>
    </location>
    <ligand>
        <name>ATP</name>
        <dbReference type="ChEBI" id="CHEBI:30616"/>
    </ligand>
</feature>
<feature type="sequence conflict" description="In Ref. 1; CAA12272." evidence="12" ref="1">
    <original>T</original>
    <variation>H</variation>
    <location>
        <position position="88"/>
    </location>
</feature>
<proteinExistence type="evidence at protein level"/>
<comment type="function">
    <text evidence="6 7 8 10">Serine/threonine-protein kinase involved in the spatial and temporal control system organizing cortical activities in mitotic and postmitotic cells (PubMed:11489177, PubMed:15292395). Required for the normal functioning of the plasma membrane in developing pollen (PubMed:16965555). Involved in the regulation of cell expansion, cell elongation, and embryo development (PubMed:23087695).</text>
</comment>
<comment type="catalytic activity">
    <reaction evidence="1">
        <text>L-seryl-[protein] + ATP = O-phospho-L-seryl-[protein] + ADP + H(+)</text>
        <dbReference type="Rhea" id="RHEA:17989"/>
        <dbReference type="Rhea" id="RHEA-COMP:9863"/>
        <dbReference type="Rhea" id="RHEA-COMP:11604"/>
        <dbReference type="ChEBI" id="CHEBI:15378"/>
        <dbReference type="ChEBI" id="CHEBI:29999"/>
        <dbReference type="ChEBI" id="CHEBI:30616"/>
        <dbReference type="ChEBI" id="CHEBI:83421"/>
        <dbReference type="ChEBI" id="CHEBI:456216"/>
        <dbReference type="EC" id="2.7.11.1"/>
    </reaction>
</comment>
<comment type="catalytic activity">
    <reaction evidence="1">
        <text>L-threonyl-[protein] + ATP = O-phospho-L-threonyl-[protein] + ADP + H(+)</text>
        <dbReference type="Rhea" id="RHEA:46608"/>
        <dbReference type="Rhea" id="RHEA-COMP:11060"/>
        <dbReference type="Rhea" id="RHEA-COMP:11605"/>
        <dbReference type="ChEBI" id="CHEBI:15378"/>
        <dbReference type="ChEBI" id="CHEBI:30013"/>
        <dbReference type="ChEBI" id="CHEBI:30616"/>
        <dbReference type="ChEBI" id="CHEBI:61977"/>
        <dbReference type="ChEBI" id="CHEBI:456216"/>
        <dbReference type="EC" id="2.7.11.1"/>
    </reaction>
</comment>
<comment type="subunit">
    <text evidence="7">Interacts with SGP1.</text>
</comment>
<comment type="subcellular location">
    <subcellularLocation>
        <location evidence="2">Cytoplasm</location>
        <location evidence="2">Cytoskeleton</location>
        <location evidence="2">Microtubule organizing center</location>
    </subcellularLocation>
    <subcellularLocation>
        <location evidence="7">Nucleus</location>
        <location evidence="7">Nucleolus</location>
    </subcellularLocation>
    <subcellularLocation>
        <location evidence="8">Cell membrane</location>
    </subcellularLocation>
    <text evidence="7 8">Accumulates in the nucleolus during interphase (PubMed:15292395). Localized to the plasma membrane in developing pollen grains (PubMed:16965555).</text>
</comment>
<comment type="tissue specificity">
    <text evidence="6 7 9 10">Expressed in both the sporophytic and the gametophytic tissues, especially in dividing cells. Mostly present in flower buds and mature flowers. Also accumulates in embryos, in roots apices, trichomes and ovule integuments.</text>
</comment>
<comment type="developmental stage">
    <text evidence="10">Expressed during embryo development.</text>
</comment>
<comment type="induction">
    <text evidence="6 7">Expression is cell cycle-regulated, with higher expression in G2-M phases.</text>
</comment>
<comment type="PTM">
    <text evidence="1">Autophosphorylated.</text>
</comment>
<comment type="disruption phenotype">
    <text evidence="8 10">Pollen lethality in plants lacking both MAP3KE1 and MAP3KE2, associated with plasma membrane irregularities following pollen mitosis I (PubMed:16965555). Smaller plants with shorter roots due to reduced cell elongation in roots and reduced cell expansion in rosette leaves, as well as embryos arrest in the early stages of development (PubMed:23087695).</text>
</comment>
<comment type="similarity">
    <text evidence="4">Belongs to the protein kinase superfamily. Ser/Thr protein kinase family.</text>
</comment>
<accession>Q9LJD8</accession>
<accession>O81809</accession>
<sequence>MARQMTSSQFHKSKTLDNKYMLGDEIGKGAYGRVYKGLDLENGDFVAIKQVSLENIVQEDLNTIMQEIDLLKNLNHKNIVKYLGSSKTKTHLHIILEYVENGSLANIIKPNKFGPFPESLVAVYIAQVLEGLVYLHEQGVIHRDIKGANILTTKEGLVKLADFGVATKLNEADVNTHSVVGTPYWMAPEVIEMSGVCAASDIWSVGCTVIELLTCVPPYYDLQPMPALFRIVQDDNPPIPDSLSPDITDFLRQCFKKDSRQRPDAKTLLSHPWIRNSRRALQSSLRHSGTIKYMKEATASSEKDDEGSQDAAESLSGENVGISKTDSKSKLPLVGVSSFRSEKDQSTPSDLGEEGTDNSEDDIMSDQVPTLSIHEKSSDAKGTPQDVSDFHGKSERGETPENLVTETSEARKNTSAIKHVGKELSIPVDQTSHSFGRKGEERGIRKAVKTPSSVSGNELARFSDPPGDASLHDLFHPLDKVSEGKPNEASTSMPTSNVNQGDSPVADGGKNDLATKLRATIAQKQMEGETGHSNDGGDLFRLMMGVLKDDVIDIDGLVFDEKVPAENLFPLQAVEFSRLVSSLRPDESEDAIVSSCQKLVAMFRQRPEQKVVFVTQHGFLPLMDLLDIPKSRVICAVLQLINEIIKDNTDFQENACLVGLIPVVMSFAGPERDRSREIRKEAAYFLQQLCQSSPLTLQMFIACRGIPVLVGFLEADYAKYREMVHLAIDGMWQVFKLKRSTPRNDFCRIAAKNGILLRLINTLYSLNEATRLASISGGLDGQAPRVRSGQLDPNNPIFGQNETSSLSMIDQPDVLKTRHGGGEEPSHASTSNSQRSDVHQPDALHPDGDKPRVSSVAPDASTSGTEDVRQQHRISLSANRTSTDKLQKLAEGASNGFPVTQTEQVRPLLSLLDKEPPSRHYSGQLDYVKHITGIERHESRLPLLHGSNEKKNNGDLDFLMAEFAEVSGRGKENGSLDTTTRYPSKTMTKKVLAIEGVASTSGIASQTASGVLSGSGVLNARPGSATSSGLLAHMVSTLSADVAREYLEKVADLLLEFARADTTVKSYMCSQSLLSRLFQMFNRVEPPILLKILECTNHLSTDPNCLENLQRADAIKHLIPNLELKDGHLVYQIHHEVLSALFNLCKINKRRQEQAAENGIIPHLMLFIMSDSPLKQYALPLLCDMAHASRNSREQLRAHGGLDVYLSLLDDEYWSVIALDSIAVCLAQDNDNRKVEQALLKQDAIQKLVDFFQSCPERHFVHILEPFLKIITKSYRINKTLAVNGLTPLLISRLDHQDAIARLNLLKLIKAVYEHHPRPKQLIVENDLPQKLQNLIEERRDGQRSGGQVLVKQMATSLLKALHINTIL</sequence>
<protein>
    <recommendedName>
        <fullName evidence="11">MAP3K epsilon protein kinase 1</fullName>
        <shortName evidence="11">AtM3KE1</shortName>
        <ecNumber evidence="1">2.7.11.1</ecNumber>
    </recommendedName>
    <alternativeName>
        <fullName evidence="12">Mitogen-activated protein kinase kinase kinase 7</fullName>
    </alternativeName>
</protein>
<keyword id="KW-0067">ATP-binding</keyword>
<keyword id="KW-0131">Cell cycle</keyword>
<keyword id="KW-0132">Cell division</keyword>
<keyword id="KW-1003">Cell membrane</keyword>
<keyword id="KW-0963">Cytoplasm</keyword>
<keyword id="KW-0206">Cytoskeleton</keyword>
<keyword id="KW-0418">Kinase</keyword>
<keyword id="KW-0472">Membrane</keyword>
<keyword id="KW-0547">Nucleotide-binding</keyword>
<keyword id="KW-0539">Nucleus</keyword>
<keyword id="KW-0597">Phosphoprotein</keyword>
<keyword id="KW-1185">Reference proteome</keyword>
<keyword id="KW-0677">Repeat</keyword>
<keyword id="KW-0723">Serine/threonine-protein kinase</keyword>
<keyword id="KW-0808">Transferase</keyword>
<evidence type="ECO:0000250" key="1">
    <source>
        <dbReference type="UniProtKB" id="A0A078CGE6"/>
    </source>
</evidence>
<evidence type="ECO:0000250" key="2">
    <source>
        <dbReference type="UniProtKB" id="Q8T2I8"/>
    </source>
</evidence>
<evidence type="ECO:0000255" key="3"/>
<evidence type="ECO:0000255" key="4">
    <source>
        <dbReference type="PROSITE-ProRule" id="PRU00159"/>
    </source>
</evidence>
<evidence type="ECO:0000256" key="5">
    <source>
        <dbReference type="SAM" id="MobiDB-lite"/>
    </source>
</evidence>
<evidence type="ECO:0000269" key="6">
    <source>
    </source>
</evidence>
<evidence type="ECO:0000269" key="7">
    <source>
    </source>
</evidence>
<evidence type="ECO:0000269" key="8">
    <source>
    </source>
</evidence>
<evidence type="ECO:0000269" key="9">
    <source>
    </source>
</evidence>
<evidence type="ECO:0000269" key="10">
    <source>
    </source>
</evidence>
<evidence type="ECO:0000303" key="11">
    <source>
    </source>
</evidence>
<evidence type="ECO:0000305" key="12"/>
<evidence type="ECO:0000312" key="13">
    <source>
        <dbReference type="Araport" id="AT3G13530"/>
    </source>
</evidence>
<evidence type="ECO:0000312" key="14">
    <source>
        <dbReference type="EMBL" id="BAB01760.1"/>
    </source>
</evidence>
<evidence type="ECO:0000312" key="15">
    <source>
        <dbReference type="Proteomes" id="UP000006548"/>
    </source>
</evidence>
<reference key="1">
    <citation type="journal article" date="2000" name="Adv. Bot. Res.">
        <title>Plant mitogen-activated protein kinase signalling pathways in the limelight.</title>
        <authorList>
            <person name="Jouannic S."/>
            <person name="Leprince A.S."/>
            <person name="Hamal A."/>
            <person name="Kreis M."/>
            <person name="Henry Y."/>
        </authorList>
        <dbReference type="AGRICOLA" id="IND22077984"/>
    </citation>
    <scope>NUCLEOTIDE SEQUENCE [GENOMIC DNA]</scope>
    <scope>REVIEW</scope>
</reference>
<reference key="2">
    <citation type="journal article" date="2000" name="DNA Res.">
        <title>Structural analysis of Arabidopsis thaliana chromosome 3. II. Sequence features of the 4,251,695 bp regions covered by 90 P1, TAC and BAC clones.</title>
        <authorList>
            <person name="Kaneko T."/>
            <person name="Katoh T."/>
            <person name="Sato S."/>
            <person name="Nakamura Y."/>
            <person name="Asamizu E."/>
            <person name="Tabata S."/>
        </authorList>
    </citation>
    <scope>NUCLEOTIDE SEQUENCE [LARGE SCALE GENOMIC DNA]</scope>
    <source>
        <strain>cv. Columbia</strain>
    </source>
</reference>
<reference key="3">
    <citation type="journal article" date="2017" name="Plant J.">
        <title>Araport11: a complete reannotation of the Arabidopsis thaliana reference genome.</title>
        <authorList>
            <person name="Cheng C.Y."/>
            <person name="Krishnakumar V."/>
            <person name="Chan A.P."/>
            <person name="Thibaud-Nissen F."/>
            <person name="Schobel S."/>
            <person name="Town C.D."/>
        </authorList>
    </citation>
    <scope>GENOME REANNOTATION</scope>
    <source>
        <strain>cv. Columbia</strain>
    </source>
</reference>
<reference key="4">
    <citation type="journal article" date="2001" name="Plant J.">
        <title>The protein kinases AtMAP3Kepsilon1 and BnMAP3Kepsilon1 are functional homologues of S. pombe cdc7p and may be involved in cell division.</title>
        <authorList>
            <person name="Jouannic S."/>
            <person name="Champion A."/>
            <person name="Segui-Simarro J.-M."/>
            <person name="Salimova E."/>
            <person name="Picaud A."/>
            <person name="Tregear J."/>
            <person name="Testillano P."/>
            <person name="Risueno M.-C."/>
            <person name="Simanis V."/>
            <person name="Kreis M."/>
            <person name="Henry Y."/>
        </authorList>
    </citation>
    <scope>FUNCTION</scope>
    <scope>TISSUE SPECIFICITY</scope>
    <scope>INDUCTION</scope>
</reference>
<reference key="5">
    <citation type="journal article" date="2002" name="Trends Plant Sci.">
        <title>Mitogen-activated protein kinase cascades in plants: a new nomenclature.</title>
        <authorList>
            <consortium name="MAPK group"/>
        </authorList>
    </citation>
    <scope>GENE FAMILY</scope>
    <scope>NOMENCLATURE</scope>
</reference>
<reference key="6">
    <citation type="journal article" date="2004" name="Funct. Integr. Genomics">
        <title>Arabidopsis kinome: after the casting.</title>
        <authorList>
            <person name="Champion A."/>
            <person name="Kreis M."/>
            <person name="Mockaitis K."/>
            <person name="Picaud A."/>
            <person name="Henry Y."/>
        </authorList>
    </citation>
    <scope>REVIEW</scope>
</reference>
<reference key="7">
    <citation type="journal article" date="2004" name="J. Cell Sci.">
        <title>AtSGP1, AtSGP2 and MAP4K alpha are nucleolar plant proteins that can complement fission yeast mutants lacking a functional SIN pathway.</title>
        <authorList>
            <person name="Champion A."/>
            <person name="Jouannic S."/>
            <person name="Guillon S."/>
            <person name="Mockaitis K."/>
            <person name="Krapp A."/>
            <person name="Picaud A."/>
            <person name="Simanis V."/>
            <person name="Kreis M."/>
            <person name="Henry Y."/>
        </authorList>
    </citation>
    <scope>FUNCTION</scope>
    <scope>TISSUE SPECIFICITY</scope>
    <scope>INDUCTION</scope>
    <scope>SUBCELLULAR LOCATION</scope>
    <scope>INTERACTION WITH SGP1</scope>
    <source>
        <strain>cv. Columbia</strain>
    </source>
</reference>
<reference key="8">
    <citation type="journal article" date="2006" name="Plant J.">
        <title>The protein kinase genes MAP3K epsilon 1 and MAP3K epsilon 2 are required for pollen viability in Arabidopsis thaliana.</title>
        <authorList>
            <person name="Chaiwongsar S."/>
            <person name="Otegui M.S."/>
            <person name="Jester P.J."/>
            <person name="Monson S.S."/>
            <person name="Krysan P.J."/>
        </authorList>
    </citation>
    <scope>FUNCTION</scope>
    <scope>DISRUPTION PHENOTYPE</scope>
    <scope>SUBCELLULAR LOCATION</scope>
    <source>
        <strain>cv. Columbia</strain>
    </source>
</reference>
<reference key="9">
    <citation type="journal article" date="2009" name="Int. J. Dev. Biol.">
        <title>Arabidopsis monomeric G-proteins, markers of early and late events in cell differentiation.</title>
        <authorList>
            <person name="Bedhomme M."/>
            <person name="Mathieu C."/>
            <person name="Pulido A."/>
            <person name="Henry Y."/>
            <person name="Bergounioux C."/>
        </authorList>
    </citation>
    <scope>TISSUE SPECIFICITY</scope>
</reference>
<reference key="10">
    <citation type="journal article" date="2009" name="Plant Physiol.">
        <title>Large-scale Arabidopsis phosphoproteome profiling reveals novel chloroplast kinase substrates and phosphorylation networks.</title>
        <authorList>
            <person name="Reiland S."/>
            <person name="Messerli G."/>
            <person name="Baerenfaller K."/>
            <person name="Gerrits B."/>
            <person name="Endler A."/>
            <person name="Grossmann J."/>
            <person name="Gruissem W."/>
            <person name="Baginsky S."/>
        </authorList>
    </citation>
    <scope>IDENTIFICATION BY MASS SPECTROMETRY [LARGE SCALE ANALYSIS]</scope>
</reference>
<reference key="11">
    <citation type="journal article" date="2012" name="Front. Plant Sci.">
        <title>Genetic analysis of the Arabidopsis protein kinases MAP3Kepsilon1 and MAP3Kepsilon2 indicates roles in cell expansion and embryo development.</title>
        <authorList>
            <person name="Chaiwongsar S."/>
            <person name="Strohm A.K."/>
            <person name="Su S.-H."/>
            <person name="Krysan P.J."/>
        </authorList>
    </citation>
    <scope>FUNCTION</scope>
    <scope>DISRUPTION PHENOTYPE</scope>
    <scope>TISSUE SPECIFICITY</scope>
    <scope>DEVELOPMENTAL STAGE</scope>
    <source>
        <strain>cv. Columbia</strain>
    </source>
</reference>
<dbReference type="EC" id="2.7.11.1" evidence="1"/>
<dbReference type="EMBL" id="AJ224982">
    <property type="protein sequence ID" value="CAA12272.1"/>
    <property type="molecule type" value="Genomic_DNA"/>
</dbReference>
<dbReference type="EMBL" id="AP000603">
    <property type="protein sequence ID" value="BAB01760.1"/>
    <property type="molecule type" value="Genomic_DNA"/>
</dbReference>
<dbReference type="EMBL" id="CP002686">
    <property type="protein sequence ID" value="AEE75368.1"/>
    <property type="molecule type" value="Genomic_DNA"/>
</dbReference>
<dbReference type="RefSeq" id="NP_187962.1">
    <property type="nucleotide sequence ID" value="NM_112199.3"/>
</dbReference>
<dbReference type="SMR" id="Q9LJD8"/>
<dbReference type="FunCoup" id="Q9LJD8">
    <property type="interactions" value="1399"/>
</dbReference>
<dbReference type="IntAct" id="Q9LJD8">
    <property type="interactions" value="3"/>
</dbReference>
<dbReference type="STRING" id="3702.Q9LJD8"/>
<dbReference type="iPTMnet" id="Q9LJD8"/>
<dbReference type="PaxDb" id="3702-AT3G13530.1"/>
<dbReference type="ProteomicsDB" id="238815"/>
<dbReference type="EnsemblPlants" id="AT3G13530.1">
    <property type="protein sequence ID" value="AT3G13530.1"/>
    <property type="gene ID" value="AT3G13530"/>
</dbReference>
<dbReference type="GeneID" id="820555"/>
<dbReference type="Gramene" id="AT3G13530.1">
    <property type="protein sequence ID" value="AT3G13530.1"/>
    <property type="gene ID" value="AT3G13530"/>
</dbReference>
<dbReference type="KEGG" id="ath:AT3G13530"/>
<dbReference type="Araport" id="AT3G13530"/>
<dbReference type="TAIR" id="AT3G13530">
    <property type="gene designation" value="MAPKKK7"/>
</dbReference>
<dbReference type="eggNOG" id="KOG0198">
    <property type="taxonomic scope" value="Eukaryota"/>
</dbReference>
<dbReference type="HOGENOM" id="CLU_001872_0_1_1"/>
<dbReference type="InParanoid" id="Q9LJD8"/>
<dbReference type="OMA" id="VKQIKLV"/>
<dbReference type="PhylomeDB" id="Q9LJD8"/>
<dbReference type="PRO" id="PR:Q9LJD8"/>
<dbReference type="Proteomes" id="UP000006548">
    <property type="component" value="Chromosome 3"/>
</dbReference>
<dbReference type="ExpressionAtlas" id="Q9LJD8">
    <property type="expression patterns" value="baseline and differential"/>
</dbReference>
<dbReference type="GO" id="GO:0005829">
    <property type="term" value="C:cytosol"/>
    <property type="evidence" value="ECO:0000314"/>
    <property type="project" value="TAIR"/>
</dbReference>
<dbReference type="GO" id="GO:0005815">
    <property type="term" value="C:microtubule organizing center"/>
    <property type="evidence" value="ECO:0007669"/>
    <property type="project" value="UniProtKB-SubCell"/>
</dbReference>
<dbReference type="GO" id="GO:0005730">
    <property type="term" value="C:nucleolus"/>
    <property type="evidence" value="ECO:0000314"/>
    <property type="project" value="UniProtKB"/>
</dbReference>
<dbReference type="GO" id="GO:0005886">
    <property type="term" value="C:plasma membrane"/>
    <property type="evidence" value="ECO:0000314"/>
    <property type="project" value="TAIR"/>
</dbReference>
<dbReference type="GO" id="GO:0005524">
    <property type="term" value="F:ATP binding"/>
    <property type="evidence" value="ECO:0007669"/>
    <property type="project" value="UniProtKB-KW"/>
</dbReference>
<dbReference type="GO" id="GO:0106310">
    <property type="term" value="F:protein serine kinase activity"/>
    <property type="evidence" value="ECO:0007669"/>
    <property type="project" value="RHEA"/>
</dbReference>
<dbReference type="GO" id="GO:0004674">
    <property type="term" value="F:protein serine/threonine kinase activity"/>
    <property type="evidence" value="ECO:0000250"/>
    <property type="project" value="UniProtKB"/>
</dbReference>
<dbReference type="GO" id="GO:0051301">
    <property type="term" value="P:cell division"/>
    <property type="evidence" value="ECO:0007669"/>
    <property type="project" value="UniProtKB-KW"/>
</dbReference>
<dbReference type="GO" id="GO:0046777">
    <property type="term" value="P:protein autophosphorylation"/>
    <property type="evidence" value="ECO:0000250"/>
    <property type="project" value="UniProtKB"/>
</dbReference>
<dbReference type="GO" id="GO:0051302">
    <property type="term" value="P:regulation of cell division"/>
    <property type="evidence" value="ECO:0000314"/>
    <property type="project" value="UniProtKB"/>
</dbReference>
<dbReference type="GO" id="GO:0045995">
    <property type="term" value="P:regulation of embryonic development"/>
    <property type="evidence" value="ECO:0000315"/>
    <property type="project" value="UniProtKB"/>
</dbReference>
<dbReference type="GO" id="GO:0061387">
    <property type="term" value="P:regulation of extent of cell growth"/>
    <property type="evidence" value="ECO:0000315"/>
    <property type="project" value="UniProtKB"/>
</dbReference>
<dbReference type="GO" id="GO:0051510">
    <property type="term" value="P:regulation of unidimensional cell growth"/>
    <property type="evidence" value="ECO:0000315"/>
    <property type="project" value="UniProtKB"/>
</dbReference>
<dbReference type="CDD" id="cd06627">
    <property type="entry name" value="STKc_Cdc7_like"/>
    <property type="match status" value="1"/>
</dbReference>
<dbReference type="FunFam" id="1.10.510.10:FF:000372">
    <property type="entry name" value="MAP3K epsilon protein kinase 1"/>
    <property type="match status" value="1"/>
</dbReference>
<dbReference type="FunFam" id="1.25.10.10:FF:000248">
    <property type="entry name" value="MAP3K epsilon protein kinase 1"/>
    <property type="match status" value="1"/>
</dbReference>
<dbReference type="FunFam" id="1.25.10.10:FF:000304">
    <property type="entry name" value="MAP3K epsilon protein kinase 1-like"/>
    <property type="match status" value="1"/>
</dbReference>
<dbReference type="Gene3D" id="1.25.10.10">
    <property type="entry name" value="Leucine-rich Repeat Variant"/>
    <property type="match status" value="3"/>
</dbReference>
<dbReference type="Gene3D" id="1.10.510.10">
    <property type="entry name" value="Transferase(Phosphotransferase) domain 1"/>
    <property type="match status" value="1"/>
</dbReference>
<dbReference type="InterPro" id="IPR011989">
    <property type="entry name" value="ARM-like"/>
</dbReference>
<dbReference type="InterPro" id="IPR016024">
    <property type="entry name" value="ARM-type_fold"/>
</dbReference>
<dbReference type="InterPro" id="IPR000225">
    <property type="entry name" value="Armadillo"/>
</dbReference>
<dbReference type="InterPro" id="IPR052441">
    <property type="entry name" value="Armadillo-Ser/Thr_Kinase"/>
</dbReference>
<dbReference type="InterPro" id="IPR011009">
    <property type="entry name" value="Kinase-like_dom_sf"/>
</dbReference>
<dbReference type="InterPro" id="IPR000719">
    <property type="entry name" value="Prot_kinase_dom"/>
</dbReference>
<dbReference type="InterPro" id="IPR017441">
    <property type="entry name" value="Protein_kinase_ATP_BS"/>
</dbReference>
<dbReference type="InterPro" id="IPR001245">
    <property type="entry name" value="Ser-Thr/Tyr_kinase_cat_dom"/>
</dbReference>
<dbReference type="InterPro" id="IPR008271">
    <property type="entry name" value="Ser/Thr_kinase_AS"/>
</dbReference>
<dbReference type="PANTHER" id="PTHR46618">
    <property type="entry name" value="ARMADILLO REPEAT-CONTAINING PROTEIN 3"/>
    <property type="match status" value="1"/>
</dbReference>
<dbReference type="PANTHER" id="PTHR46618:SF1">
    <property type="entry name" value="ARMADILLO REPEAT-CONTAINING PROTEIN 3"/>
    <property type="match status" value="1"/>
</dbReference>
<dbReference type="Pfam" id="PF00069">
    <property type="entry name" value="Pkinase"/>
    <property type="match status" value="1"/>
</dbReference>
<dbReference type="PRINTS" id="PR00109">
    <property type="entry name" value="TYRKINASE"/>
</dbReference>
<dbReference type="SMART" id="SM00185">
    <property type="entry name" value="ARM"/>
    <property type="match status" value="4"/>
</dbReference>
<dbReference type="SMART" id="SM00220">
    <property type="entry name" value="S_TKc"/>
    <property type="match status" value="1"/>
</dbReference>
<dbReference type="SUPFAM" id="SSF48371">
    <property type="entry name" value="ARM repeat"/>
    <property type="match status" value="2"/>
</dbReference>
<dbReference type="SUPFAM" id="SSF56112">
    <property type="entry name" value="Protein kinase-like (PK-like)"/>
    <property type="match status" value="1"/>
</dbReference>
<dbReference type="PROSITE" id="PS00107">
    <property type="entry name" value="PROTEIN_KINASE_ATP"/>
    <property type="match status" value="1"/>
</dbReference>
<dbReference type="PROSITE" id="PS50011">
    <property type="entry name" value="PROTEIN_KINASE_DOM"/>
    <property type="match status" value="1"/>
</dbReference>
<dbReference type="PROSITE" id="PS00108">
    <property type="entry name" value="PROTEIN_KINASE_ST"/>
    <property type="match status" value="1"/>
</dbReference>
<gene>
    <name evidence="11" type="primary">M3KE1</name>
    <name evidence="12" type="synonym">MAPKKK7</name>
    <name evidence="13" type="ordered locus">At3g13530</name>
    <name evidence="14" type="ORF">MRP15.19</name>
</gene>
<name>M3KE1_ARATH</name>